<name>DICER_CHICK</name>
<evidence type="ECO:0000250" key="1"/>
<evidence type="ECO:0000255" key="2">
    <source>
        <dbReference type="PROSITE-ProRule" id="PRU00142"/>
    </source>
</evidence>
<evidence type="ECO:0000255" key="3">
    <source>
        <dbReference type="PROSITE-ProRule" id="PRU00177"/>
    </source>
</evidence>
<evidence type="ECO:0000255" key="4">
    <source>
        <dbReference type="PROSITE-ProRule" id="PRU00266"/>
    </source>
</evidence>
<evidence type="ECO:0000255" key="5">
    <source>
        <dbReference type="PROSITE-ProRule" id="PRU00541"/>
    </source>
</evidence>
<evidence type="ECO:0000255" key="6">
    <source>
        <dbReference type="PROSITE-ProRule" id="PRU00542"/>
    </source>
</evidence>
<evidence type="ECO:0000255" key="7">
    <source>
        <dbReference type="PROSITE-ProRule" id="PRU00657"/>
    </source>
</evidence>
<evidence type="ECO:0000256" key="8">
    <source>
        <dbReference type="SAM" id="MobiDB-lite"/>
    </source>
</evidence>
<evidence type="ECO:0000305" key="9"/>
<protein>
    <recommendedName>
        <fullName>Endoribonuclease Dicer</fullName>
        <ecNumber>3.1.26.3</ecNumber>
    </recommendedName>
</protein>
<comment type="function">
    <text evidence="1">Double-stranded RNA (dsRNA) endoribonuclease playing a central role in short dsRNA-mediated post-transcriptional gene silencing. Cleaves naturally occurring long dsRNAs and short hairpin pre-microRNAs (miRNA) into fragments of twenty-one to twenty-three nucleotides with 3' overhang of two nucleotides, producing respectively short interfering RNAs (siRNA) and mature microRNAs. SiRNAs and miRNAs serve as guide to direct the RNA-induced silencing complex (RISC) to complementary RNAs to degrade them or prevent their translation. Gene silencing mediated by siRNAs, also called RNA interference, controls the elimination of transcripts from mobile and repetitive DNA elements of the genome but also the degradation of exogenous RNA of viral origin for instance. The miRNA pathway on the other side is a mean to specifically regulate the expression of target genes (By similarity).</text>
</comment>
<comment type="catalytic activity">
    <reaction>
        <text>Endonucleolytic cleavage to 5'-phosphomonoester.</text>
        <dbReference type="EC" id="3.1.26.3"/>
    </reaction>
</comment>
<comment type="cofactor">
    <cofactor evidence="1">
        <name>Mg(2+)</name>
        <dbReference type="ChEBI" id="CHEBI:18420"/>
    </cofactor>
    <cofactor evidence="1">
        <name>Mn(2+)</name>
        <dbReference type="ChEBI" id="CHEBI:29035"/>
    </cofactor>
    <text evidence="1">Binds 2 magnesium or manganese ions per subunit.</text>
</comment>
<comment type="subunit">
    <text evidence="1">Component of the RISC loading complex (RLC), or micro-RNA (miRNA) loading complex (miRLC), which is composed of DICER1, AGO2 and TARBP2; DICER1 and TARBP2 are required to process precursor miRNAs (pre-miRNAs) to mature miRNAs and then load them onto AGO2. Note that the trimeric RLC/miRLC is also referred to as RISC (By similarity).</text>
</comment>
<comment type="subcellular location">
    <subcellularLocation>
        <location evidence="1">Cytoplasm</location>
    </subcellularLocation>
</comment>
<comment type="similarity">
    <text evidence="7">Belongs to the helicase family. Dicer subfamily.</text>
</comment>
<comment type="caution">
    <text evidence="9">It is uncertain whether Met-1 or Met-11 is the initiator.</text>
</comment>
<reference key="1">
    <citation type="journal article" date="2004" name="Nat. Cell Biol.">
        <title>Dicer is essential for formation of the heterochromatin structure in vertebrate cells.</title>
        <authorList>
            <person name="Fukagawa T."/>
            <person name="Nogami M."/>
            <person name="Yoshikawa M."/>
            <person name="Ikeno M."/>
            <person name="Okazaki T."/>
            <person name="Takami Y."/>
            <person name="Nakayama T."/>
            <person name="Oshimura M."/>
        </authorList>
    </citation>
    <scope>NUCLEOTIDE SEQUENCE [MRNA]</scope>
</reference>
<organism>
    <name type="scientific">Gallus gallus</name>
    <name type="common">Chicken</name>
    <dbReference type="NCBI Taxonomy" id="9031"/>
    <lineage>
        <taxon>Eukaryota</taxon>
        <taxon>Metazoa</taxon>
        <taxon>Chordata</taxon>
        <taxon>Craniata</taxon>
        <taxon>Vertebrata</taxon>
        <taxon>Euteleostomi</taxon>
        <taxon>Archelosauria</taxon>
        <taxon>Archosauria</taxon>
        <taxon>Dinosauria</taxon>
        <taxon>Saurischia</taxon>
        <taxon>Theropoda</taxon>
        <taxon>Coelurosauria</taxon>
        <taxon>Aves</taxon>
        <taxon>Neognathae</taxon>
        <taxon>Galloanserae</taxon>
        <taxon>Galliformes</taxon>
        <taxon>Phasianidae</taxon>
        <taxon>Phasianinae</taxon>
        <taxon>Gallus</taxon>
    </lineage>
</organism>
<keyword id="KW-0067">ATP-binding</keyword>
<keyword id="KW-0963">Cytoplasm</keyword>
<keyword id="KW-0255">Endonuclease</keyword>
<keyword id="KW-0347">Helicase</keyword>
<keyword id="KW-0378">Hydrolase</keyword>
<keyword id="KW-0460">Magnesium</keyword>
<keyword id="KW-0464">Manganese</keyword>
<keyword id="KW-0479">Metal-binding</keyword>
<keyword id="KW-0540">Nuclease</keyword>
<keyword id="KW-0547">Nucleotide-binding</keyword>
<keyword id="KW-0597">Phosphoprotein</keyword>
<keyword id="KW-1185">Reference proteome</keyword>
<keyword id="KW-0677">Repeat</keyword>
<keyword id="KW-0694">RNA-binding</keyword>
<keyword id="KW-0943">RNA-mediated gene silencing</keyword>
<dbReference type="EC" id="3.1.26.3"/>
<dbReference type="EMBL" id="AB253768">
    <property type="protein sequence ID" value="BAE87103.1"/>
    <property type="molecule type" value="mRNA"/>
</dbReference>
<dbReference type="RefSeq" id="NP_001035555.1">
    <property type="nucleotide sequence ID" value="NM_001040465.1"/>
</dbReference>
<dbReference type="SMR" id="Q25BN1"/>
<dbReference type="FunCoup" id="Q25BN1">
    <property type="interactions" value="1610"/>
</dbReference>
<dbReference type="STRING" id="9031.ENSGALP00000036777"/>
<dbReference type="GlyGen" id="Q25BN1">
    <property type="glycosylation" value="1 site"/>
</dbReference>
<dbReference type="PaxDb" id="9031-ENSGALP00000036777"/>
<dbReference type="GeneID" id="423437"/>
<dbReference type="KEGG" id="gga:423437"/>
<dbReference type="CTD" id="23405"/>
<dbReference type="VEuPathDB" id="HostDB:geneid_423437"/>
<dbReference type="eggNOG" id="KOG0701">
    <property type="taxonomic scope" value="Eukaryota"/>
</dbReference>
<dbReference type="InParanoid" id="Q25BN1"/>
<dbReference type="OrthoDB" id="2392202at2759"/>
<dbReference type="PhylomeDB" id="Q25BN1"/>
<dbReference type="PRO" id="PR:Q25BN1"/>
<dbReference type="Proteomes" id="UP000000539">
    <property type="component" value="Unassembled WGS sequence"/>
</dbReference>
<dbReference type="GO" id="GO:0005737">
    <property type="term" value="C:cytoplasm"/>
    <property type="evidence" value="ECO:0000318"/>
    <property type="project" value="GO_Central"/>
</dbReference>
<dbReference type="GO" id="GO:0005634">
    <property type="term" value="C:nucleus"/>
    <property type="evidence" value="ECO:0000318"/>
    <property type="project" value="GO_Central"/>
</dbReference>
<dbReference type="GO" id="GO:0016442">
    <property type="term" value="C:RISC complex"/>
    <property type="evidence" value="ECO:0000250"/>
    <property type="project" value="UniProtKB"/>
</dbReference>
<dbReference type="GO" id="GO:0070578">
    <property type="term" value="C:RISC-loading complex"/>
    <property type="evidence" value="ECO:0000250"/>
    <property type="project" value="UniProtKB"/>
</dbReference>
<dbReference type="GO" id="GO:0005524">
    <property type="term" value="F:ATP binding"/>
    <property type="evidence" value="ECO:0007669"/>
    <property type="project" value="UniProtKB-KW"/>
</dbReference>
<dbReference type="GO" id="GO:0004530">
    <property type="term" value="F:deoxyribonuclease I activity"/>
    <property type="evidence" value="ECO:0000318"/>
    <property type="project" value="GO_Central"/>
</dbReference>
<dbReference type="GO" id="GO:0004386">
    <property type="term" value="F:helicase activity"/>
    <property type="evidence" value="ECO:0007669"/>
    <property type="project" value="UniProtKB-KW"/>
</dbReference>
<dbReference type="GO" id="GO:0046872">
    <property type="term" value="F:metal ion binding"/>
    <property type="evidence" value="ECO:0007669"/>
    <property type="project" value="UniProtKB-KW"/>
</dbReference>
<dbReference type="GO" id="GO:0004525">
    <property type="term" value="F:ribonuclease III activity"/>
    <property type="evidence" value="ECO:0000318"/>
    <property type="project" value="GO_Central"/>
</dbReference>
<dbReference type="GO" id="GO:0003723">
    <property type="term" value="F:RNA binding"/>
    <property type="evidence" value="ECO:0000318"/>
    <property type="project" value="GO_Central"/>
</dbReference>
<dbReference type="GO" id="GO:0006309">
    <property type="term" value="P:apoptotic DNA fragmentation"/>
    <property type="evidence" value="ECO:0000318"/>
    <property type="project" value="GO_Central"/>
</dbReference>
<dbReference type="GO" id="GO:0098795">
    <property type="term" value="P:global gene silencing by mRNA cleavage"/>
    <property type="evidence" value="ECO:0000250"/>
    <property type="project" value="UniProtKB"/>
</dbReference>
<dbReference type="GO" id="GO:0031054">
    <property type="term" value="P:pre-miRNA processing"/>
    <property type="evidence" value="ECO:0000250"/>
    <property type="project" value="UniProtKB"/>
</dbReference>
<dbReference type="GO" id="GO:0030422">
    <property type="term" value="P:siRNA processing"/>
    <property type="evidence" value="ECO:0000250"/>
    <property type="project" value="UniProtKB"/>
</dbReference>
<dbReference type="CDD" id="cd18034">
    <property type="entry name" value="DEXHc_dicer"/>
    <property type="match status" value="1"/>
</dbReference>
<dbReference type="CDD" id="cd15903">
    <property type="entry name" value="Dicer_PBD"/>
    <property type="match status" value="1"/>
</dbReference>
<dbReference type="CDD" id="cd10843">
    <property type="entry name" value="DSRM_DICER"/>
    <property type="match status" value="1"/>
</dbReference>
<dbReference type="CDD" id="cd02843">
    <property type="entry name" value="PAZ_dicer_like"/>
    <property type="match status" value="1"/>
</dbReference>
<dbReference type="CDD" id="cd00593">
    <property type="entry name" value="RIBOc"/>
    <property type="match status" value="2"/>
</dbReference>
<dbReference type="CDD" id="cd18802">
    <property type="entry name" value="SF2_C_dicer"/>
    <property type="match status" value="1"/>
</dbReference>
<dbReference type="FunFam" id="1.10.1520.10:FF:000023">
    <property type="entry name" value="Endoribonuclease dcr-1"/>
    <property type="match status" value="1"/>
</dbReference>
<dbReference type="FunFam" id="3.40.50.300:FF:000628">
    <property type="entry name" value="Endoribonuclease Dicer"/>
    <property type="match status" value="1"/>
</dbReference>
<dbReference type="FunFam" id="3.30.160.20:FF:000015">
    <property type="entry name" value="endoribonuclease Dicer"/>
    <property type="match status" value="1"/>
</dbReference>
<dbReference type="FunFam" id="3.30.160.380:FF:000002">
    <property type="entry name" value="Endoribonuclease Dicer isoform 1"/>
    <property type="match status" value="1"/>
</dbReference>
<dbReference type="FunFam" id="3.40.50.300:FF:000588">
    <property type="entry name" value="Endoribonuclease Dicer isoform 1"/>
    <property type="match status" value="1"/>
</dbReference>
<dbReference type="FunFam" id="2.170.260.10:FF:000002">
    <property type="entry name" value="Putative Endoribonuclease Dicer"/>
    <property type="match status" value="1"/>
</dbReference>
<dbReference type="FunFam" id="1.10.1520.10:FF:000005">
    <property type="entry name" value="Putative endoribonuclease dicer"/>
    <property type="match status" value="1"/>
</dbReference>
<dbReference type="Gene3D" id="3.30.160.20">
    <property type="match status" value="1"/>
</dbReference>
<dbReference type="Gene3D" id="3.30.160.380">
    <property type="entry name" value="Dicer dimerisation domain"/>
    <property type="match status" value="1"/>
</dbReference>
<dbReference type="Gene3D" id="3.40.50.300">
    <property type="entry name" value="P-loop containing nucleotide triphosphate hydrolases"/>
    <property type="match status" value="2"/>
</dbReference>
<dbReference type="Gene3D" id="2.170.260.10">
    <property type="entry name" value="paz domain"/>
    <property type="match status" value="1"/>
</dbReference>
<dbReference type="Gene3D" id="1.10.1520.10">
    <property type="entry name" value="Ribonuclease III domain"/>
    <property type="match status" value="2"/>
</dbReference>
<dbReference type="InterPro" id="IPR011545">
    <property type="entry name" value="DEAD/DEAH_box_helicase_dom"/>
</dbReference>
<dbReference type="InterPro" id="IPR038248">
    <property type="entry name" value="Dicer_dimer_sf"/>
</dbReference>
<dbReference type="InterPro" id="IPR005034">
    <property type="entry name" value="Dicer_dimerisation_dom"/>
</dbReference>
<dbReference type="InterPro" id="IPR044441">
    <property type="entry name" value="DICER_DSRM"/>
</dbReference>
<dbReference type="InterPro" id="IPR048513">
    <property type="entry name" value="Dicer_PBD"/>
</dbReference>
<dbReference type="InterPro" id="IPR048512">
    <property type="entry name" value="Dicer_platform"/>
</dbReference>
<dbReference type="InterPro" id="IPR014720">
    <property type="entry name" value="dsRBD_dom"/>
</dbReference>
<dbReference type="InterPro" id="IPR014001">
    <property type="entry name" value="Helicase_ATP-bd"/>
</dbReference>
<dbReference type="InterPro" id="IPR001650">
    <property type="entry name" value="Helicase_C-like"/>
</dbReference>
<dbReference type="InterPro" id="IPR027417">
    <property type="entry name" value="P-loop_NTPase"/>
</dbReference>
<dbReference type="InterPro" id="IPR003100">
    <property type="entry name" value="PAZ_dom"/>
</dbReference>
<dbReference type="InterPro" id="IPR036085">
    <property type="entry name" value="PAZ_dom_sf"/>
</dbReference>
<dbReference type="InterPro" id="IPR000999">
    <property type="entry name" value="RNase_III_dom"/>
</dbReference>
<dbReference type="InterPro" id="IPR036389">
    <property type="entry name" value="RNase_III_sf"/>
</dbReference>
<dbReference type="PANTHER" id="PTHR14950">
    <property type="entry name" value="DICER-RELATED"/>
    <property type="match status" value="1"/>
</dbReference>
<dbReference type="PANTHER" id="PTHR14950:SF37">
    <property type="entry name" value="ENDORIBONUCLEASE DICER"/>
    <property type="match status" value="1"/>
</dbReference>
<dbReference type="Pfam" id="PF00270">
    <property type="entry name" value="DEAD"/>
    <property type="match status" value="1"/>
</dbReference>
<dbReference type="Pfam" id="PF03368">
    <property type="entry name" value="Dicer_dimer"/>
    <property type="match status" value="1"/>
</dbReference>
<dbReference type="Pfam" id="PF20932">
    <property type="entry name" value="Dicer_dsRBD"/>
    <property type="match status" value="1"/>
</dbReference>
<dbReference type="Pfam" id="PF20930">
    <property type="entry name" value="Dicer_PBD"/>
    <property type="match status" value="1"/>
</dbReference>
<dbReference type="Pfam" id="PF20931">
    <property type="entry name" value="Dicer_platform"/>
    <property type="match status" value="1"/>
</dbReference>
<dbReference type="Pfam" id="PF00271">
    <property type="entry name" value="Helicase_C"/>
    <property type="match status" value="1"/>
</dbReference>
<dbReference type="Pfam" id="PF02170">
    <property type="entry name" value="PAZ"/>
    <property type="match status" value="1"/>
</dbReference>
<dbReference type="Pfam" id="PF00636">
    <property type="entry name" value="Ribonuclease_3"/>
    <property type="match status" value="2"/>
</dbReference>
<dbReference type="SMART" id="SM00487">
    <property type="entry name" value="DEXDc"/>
    <property type="match status" value="1"/>
</dbReference>
<dbReference type="SMART" id="SM00358">
    <property type="entry name" value="DSRM"/>
    <property type="match status" value="1"/>
</dbReference>
<dbReference type="SMART" id="SM00490">
    <property type="entry name" value="HELICc"/>
    <property type="match status" value="1"/>
</dbReference>
<dbReference type="SMART" id="SM00949">
    <property type="entry name" value="PAZ"/>
    <property type="match status" value="1"/>
</dbReference>
<dbReference type="SMART" id="SM00535">
    <property type="entry name" value="RIBOc"/>
    <property type="match status" value="2"/>
</dbReference>
<dbReference type="SUPFAM" id="SSF54768">
    <property type="entry name" value="dsRNA-binding domain-like"/>
    <property type="match status" value="1"/>
</dbReference>
<dbReference type="SUPFAM" id="SSF52540">
    <property type="entry name" value="P-loop containing nucleoside triphosphate hydrolases"/>
    <property type="match status" value="1"/>
</dbReference>
<dbReference type="SUPFAM" id="SSF101690">
    <property type="entry name" value="PAZ domain"/>
    <property type="match status" value="1"/>
</dbReference>
<dbReference type="SUPFAM" id="SSF69065">
    <property type="entry name" value="RNase III domain-like"/>
    <property type="match status" value="2"/>
</dbReference>
<dbReference type="PROSITE" id="PS51327">
    <property type="entry name" value="DICER_DSRBF"/>
    <property type="match status" value="1"/>
</dbReference>
<dbReference type="PROSITE" id="PS50137">
    <property type="entry name" value="DS_RBD"/>
    <property type="match status" value="1"/>
</dbReference>
<dbReference type="PROSITE" id="PS51192">
    <property type="entry name" value="HELICASE_ATP_BIND_1"/>
    <property type="match status" value="1"/>
</dbReference>
<dbReference type="PROSITE" id="PS51194">
    <property type="entry name" value="HELICASE_CTER"/>
    <property type="match status" value="1"/>
</dbReference>
<dbReference type="PROSITE" id="PS50821">
    <property type="entry name" value="PAZ"/>
    <property type="match status" value="1"/>
</dbReference>
<dbReference type="PROSITE" id="PS00517">
    <property type="entry name" value="RNASE_3_1"/>
    <property type="match status" value="1"/>
</dbReference>
<dbReference type="PROSITE" id="PS50142">
    <property type="entry name" value="RNASE_3_2"/>
    <property type="match status" value="2"/>
</dbReference>
<feature type="chain" id="PRO_0000373984" description="Endoribonuclease Dicer">
    <location>
        <begin position="1"/>
        <end position="1921"/>
    </location>
</feature>
<feature type="domain" description="Helicase ATP-binding" evidence="5">
    <location>
        <begin position="51"/>
        <end position="227"/>
    </location>
</feature>
<feature type="domain" description="Helicase C-terminal" evidence="6">
    <location>
        <begin position="433"/>
        <end position="602"/>
    </location>
</feature>
<feature type="domain" description="Dicer dsRNA-binding fold" evidence="7">
    <location>
        <begin position="630"/>
        <end position="722"/>
    </location>
</feature>
<feature type="domain" description="PAZ" evidence="2">
    <location>
        <begin position="895"/>
        <end position="1042"/>
    </location>
</feature>
<feature type="domain" description="RNase III 1" evidence="3">
    <location>
        <begin position="1277"/>
        <end position="1404"/>
    </location>
</feature>
<feature type="domain" description="RNase III 2" evidence="3">
    <location>
        <begin position="1665"/>
        <end position="1823"/>
    </location>
</feature>
<feature type="domain" description="DRBM" evidence="4">
    <location>
        <begin position="1848"/>
        <end position="1913"/>
    </location>
</feature>
<feature type="region of interest" description="Disordered" evidence="8">
    <location>
        <begin position="409"/>
        <end position="433"/>
    </location>
</feature>
<feature type="region of interest" description="Disordered" evidence="8">
    <location>
        <begin position="727"/>
        <end position="746"/>
    </location>
</feature>
<feature type="region of interest" description="Disordered" evidence="8">
    <location>
        <begin position="1270"/>
        <end position="1289"/>
    </location>
</feature>
<feature type="region of interest" description="Disordered" evidence="8">
    <location>
        <begin position="1782"/>
        <end position="1801"/>
    </location>
</feature>
<feature type="short sequence motif" description="DECH box">
    <location>
        <begin position="175"/>
        <end position="178"/>
    </location>
</feature>
<feature type="compositionally biased region" description="Acidic residues" evidence="8">
    <location>
        <begin position="414"/>
        <end position="425"/>
    </location>
</feature>
<feature type="binding site" evidence="5">
    <location>
        <begin position="64"/>
        <end position="71"/>
    </location>
    <ligand>
        <name>ATP</name>
        <dbReference type="ChEBI" id="CHEBI:30616"/>
    </ligand>
</feature>
<feature type="binding site" evidence="1">
    <location>
        <position position="1317"/>
    </location>
    <ligand>
        <name>Mg(2+)</name>
        <dbReference type="ChEBI" id="CHEBI:18420"/>
        <label>1</label>
    </ligand>
</feature>
<feature type="binding site" evidence="1">
    <location>
        <position position="1396"/>
    </location>
    <ligand>
        <name>Mg(2+)</name>
        <dbReference type="ChEBI" id="CHEBI:18420"/>
        <label>1</label>
    </ligand>
</feature>
<feature type="binding site" evidence="1">
    <location>
        <position position="1399"/>
    </location>
    <ligand>
        <name>Mg(2+)</name>
        <dbReference type="ChEBI" id="CHEBI:18420"/>
        <label>1</label>
    </ligand>
</feature>
<feature type="binding site" evidence="1">
    <location>
        <position position="1704"/>
    </location>
    <ligand>
        <name>Mg(2+)</name>
        <dbReference type="ChEBI" id="CHEBI:18420"/>
        <label>2</label>
    </ligand>
</feature>
<feature type="binding site" evidence="1">
    <location>
        <position position="1809"/>
    </location>
    <ligand>
        <name>Mg(2+)</name>
        <dbReference type="ChEBI" id="CHEBI:18420"/>
        <label>2</label>
    </ligand>
</feature>
<feature type="binding site" evidence="1">
    <location>
        <position position="1812"/>
    </location>
    <ligand>
        <name>Mg(2+)</name>
        <dbReference type="ChEBI" id="CHEBI:18420"/>
        <label>2</label>
    </ligand>
</feature>
<feature type="site" description="Important for activity" evidence="1">
    <location>
        <position position="1805"/>
    </location>
</feature>
<proteinExistence type="evidence at transcript level"/>
<gene>
    <name type="primary">DICER1</name>
    <name type="synonym">DICER</name>
</gene>
<sequence length="1921" mass="218610">MKSPALQSLSMAGLQLMTPASSPMGPFFGLPWQQEAIHDNIYTPRKYQVELLEAALDHNTIVCLNTGSGKTFIAVLLTKELSYQIRGDFNKNGKRTVFLVNSANQVAQQVSAVRTHSDLKVGEYSSLEVTESWTKEKWSQEFSKHQVLVMTCHVALTVLRNEYLSLSNINLLVFDECHLAIQDHPYREIMKICEDYPSCPRILGLTASILNGKCDPAELEEKIKKLEKILKSNAETATDLVVLDRYTSQPCEIVVDCGPYTDKSGLYGRLLRELDEALHFLNDCNISVHSKERDSTLISKQILSDCRAVLVVLGPWCADKVAGMMVRELQKYIKHEQEELHRKFLLFTDTFLRKIHALCEEHFSPASLDLKFVTPKVIKLLEILRKYKPYERQQFESVEWYNNRNQDNYVSWSDSEDDDEDEEIEEKEKPETNFPSPFTNILCGIIFVERRYTAVVLNRLIKEAGKQDPELAYISSNFITGHGIGKNQPRNKQMEVEFRKQEEVLRKFRAHETNLLIATSIVEEGVDIPKCNLVVRFDLPTEYRSYVQSKGRARAPISNYIMLADTDKIKSFEEDLKTYKAIEKILRNKCSKSVDTSETETEPIVDDDDVFPPYVLRTDENSPRVTINTAIGHINRYCARLPSDPFTHLAPKCKTRELPDHTFYSTLYLPINSPLRASIVGPPMSCARLAERVVALICCEKLHKIGELDDHLMPVGKETVKYEEELDLHDEEETSVPGRPGSTKRRQCYPKAIPECLRDSYPKPDQPCYLYVIGMVLTTPLPDELNFRRRKLYPPEDTTRCFGILTAKPIPQIPHFPVYTRSGEVTISIELKKSGFTLSLQMLELITRLHQYIFSHILRLEKPALEFKPTEADSAYCVLPLNIVDDSSTLDIDFKFMEDIEKSEARTGIPSTQYTKEMPFIFKLEDYQDAVIIPRYRNFDQPHRFYVADVYTDLTPLSKFPSPEYETFAEYYKTKYNLDLTNLNQPLLDVDHTSSRLNLLTPRHLNQKGKALPLSSAEKRKAKWESLQNKQILVPELCAIHPIPASLWRKAVCLPSILYRLHCLLTAEELRAQTATDAGVGVKSLPADFRYPNLDFGWKKSIDSKSFISIPSSSLVENENYCKHSTIVVPENAAHQGANRTSSAEKHDQMSVSYRTLLDESPSKLQIDVSAELAAINGVSYNKNLANGNCDLVNRDFCQGNQLNYCRQEIPVQPTTSYPIQNLYSSENQPKPSNECTLLSNKYLDGNANRSTSDGCPKMTVTTSTSTALNLSKDKVDSEKNTSSGYSSKTLGPNPGLILQALTLSNASDGFNLERLEMLGDSFLKHAITTYLFCTYPDAHEGRLSYMRSKKVSNCNLYRLGKKKGLPSRMVVSIFDPPVNWLPPGYIVNQDKSNTDKWEKEETTKENLLANGKLDYDDDDEEDEDLMWRLPKEETDFEDDFLEYDQEHIKFIDSMLMGSGAFVKKISLSHFSTTDSNYEWKAPKKSSLGNVPFSSDFDDFDYSSWDAMCYLDPSKAVEEDDFVVGFWNPSEENCGVDAGKQSISYDLHTEQCIADKSIADCVEALLGCYLTSCGERAAQLFLCSLGLKVLPVIKKTDWESTLCATGENCNSEQKNLSPNSVSACIVNSEPSLYKDLEYGCLKIPPRCMFDHPDAEKTLNHLISGFENFEKKINYSFKNKAYLLQAFTHASYHYNTITDCYQRLEFLGDAILDYLITKHLYEDPRQHSPGVLTDLRSALVNNTIFASLAVKYDYHKYFKAVSPELFHVIDDFVQFQMEKNEMQGMDSELRRSEEDEEKEEDIEVPKAMGDIFESLAGAIYMDSGMSLEMVWQVYYPMMRPLIEKFSANVPRSPVRELLEMEPETAKFSPAERTYDGKVRVTVEVVGKGKFKGVGRSYRIAKSAAARRALRSLKANQPQVPNS</sequence>
<accession>Q25BN1</accession>